<organism>
    <name type="scientific">Bdellovibrio bacteriovorus (strain ATCC 15356 / DSM 50701 / NCIMB 9529 / HD100)</name>
    <dbReference type="NCBI Taxonomy" id="264462"/>
    <lineage>
        <taxon>Bacteria</taxon>
        <taxon>Pseudomonadati</taxon>
        <taxon>Bdellovibrionota</taxon>
        <taxon>Bdellovibrionia</taxon>
        <taxon>Bdellovibrionales</taxon>
        <taxon>Pseudobdellovibrionaceae</taxon>
        <taxon>Bdellovibrio</taxon>
    </lineage>
</organism>
<reference key="1">
    <citation type="journal article" date="2004" name="Science">
        <title>A predator unmasked: life cycle of Bdellovibrio bacteriovorus from a genomic perspective.</title>
        <authorList>
            <person name="Rendulic S."/>
            <person name="Jagtap P."/>
            <person name="Rosinus A."/>
            <person name="Eppinger M."/>
            <person name="Baar C."/>
            <person name="Lanz C."/>
            <person name="Keller H."/>
            <person name="Lambert C."/>
            <person name="Evans K.J."/>
            <person name="Goesmann A."/>
            <person name="Meyer F."/>
            <person name="Sockett R.E."/>
            <person name="Schuster S.C."/>
        </authorList>
    </citation>
    <scope>NUCLEOTIDE SEQUENCE [LARGE SCALE GENOMIC DNA]</scope>
    <source>
        <strain>ATCC 15356 / DSM 50701 / NCIMB 9529 / HD100</strain>
    </source>
</reference>
<proteinExistence type="inferred from homology"/>
<accession>P61061</accession>
<comment type="function">
    <text evidence="1">One of the primary rRNA binding proteins, this protein initially binds near the 5'-end of the 23S rRNA. It is important during the early stages of 50S assembly. It makes multiple contacts with different domains of the 23S rRNA in the assembled 50S subunit and ribosome.</text>
</comment>
<comment type="function">
    <text evidence="1">Forms part of the polypeptide exit tunnel.</text>
</comment>
<comment type="subunit">
    <text evidence="1">Part of the 50S ribosomal subunit.</text>
</comment>
<comment type="similarity">
    <text evidence="1">Belongs to the universal ribosomal protein uL4 family.</text>
</comment>
<protein>
    <recommendedName>
        <fullName evidence="1">Large ribosomal subunit protein uL4</fullName>
    </recommendedName>
    <alternativeName>
        <fullName evidence="3">50S ribosomal protein L4</fullName>
    </alternativeName>
</protein>
<name>RL4_BDEBA</name>
<feature type="chain" id="PRO_0000129185" description="Large ribosomal subunit protein uL4">
    <location>
        <begin position="1"/>
        <end position="209"/>
    </location>
</feature>
<feature type="region of interest" description="Disordered" evidence="2">
    <location>
        <begin position="50"/>
        <end position="89"/>
    </location>
</feature>
<dbReference type="EMBL" id="BX842654">
    <property type="protein sequence ID" value="CAE80747.1"/>
    <property type="molecule type" value="Genomic_DNA"/>
</dbReference>
<dbReference type="RefSeq" id="WP_011165351.1">
    <property type="nucleotide sequence ID" value="NC_005363.1"/>
</dbReference>
<dbReference type="SMR" id="P61061"/>
<dbReference type="STRING" id="264462.Bd2975"/>
<dbReference type="GeneID" id="93013838"/>
<dbReference type="KEGG" id="bba:Bd2975"/>
<dbReference type="eggNOG" id="COG0088">
    <property type="taxonomic scope" value="Bacteria"/>
</dbReference>
<dbReference type="HOGENOM" id="CLU_041575_5_2_7"/>
<dbReference type="Proteomes" id="UP000008080">
    <property type="component" value="Chromosome"/>
</dbReference>
<dbReference type="GO" id="GO:1990904">
    <property type="term" value="C:ribonucleoprotein complex"/>
    <property type="evidence" value="ECO:0007669"/>
    <property type="project" value="UniProtKB-KW"/>
</dbReference>
<dbReference type="GO" id="GO:0005840">
    <property type="term" value="C:ribosome"/>
    <property type="evidence" value="ECO:0007669"/>
    <property type="project" value="UniProtKB-KW"/>
</dbReference>
<dbReference type="GO" id="GO:0019843">
    <property type="term" value="F:rRNA binding"/>
    <property type="evidence" value="ECO:0007669"/>
    <property type="project" value="UniProtKB-UniRule"/>
</dbReference>
<dbReference type="GO" id="GO:0003735">
    <property type="term" value="F:structural constituent of ribosome"/>
    <property type="evidence" value="ECO:0007669"/>
    <property type="project" value="InterPro"/>
</dbReference>
<dbReference type="GO" id="GO:0006412">
    <property type="term" value="P:translation"/>
    <property type="evidence" value="ECO:0007669"/>
    <property type="project" value="UniProtKB-UniRule"/>
</dbReference>
<dbReference type="Gene3D" id="3.40.1370.10">
    <property type="match status" value="1"/>
</dbReference>
<dbReference type="HAMAP" id="MF_01328_B">
    <property type="entry name" value="Ribosomal_uL4_B"/>
    <property type="match status" value="1"/>
</dbReference>
<dbReference type="InterPro" id="IPR002136">
    <property type="entry name" value="Ribosomal_uL4"/>
</dbReference>
<dbReference type="InterPro" id="IPR013005">
    <property type="entry name" value="Ribosomal_uL4-like"/>
</dbReference>
<dbReference type="InterPro" id="IPR023574">
    <property type="entry name" value="Ribosomal_uL4_dom_sf"/>
</dbReference>
<dbReference type="NCBIfam" id="TIGR03953">
    <property type="entry name" value="rplD_bact"/>
    <property type="match status" value="1"/>
</dbReference>
<dbReference type="PANTHER" id="PTHR10746">
    <property type="entry name" value="50S RIBOSOMAL PROTEIN L4"/>
    <property type="match status" value="1"/>
</dbReference>
<dbReference type="PANTHER" id="PTHR10746:SF6">
    <property type="entry name" value="LARGE RIBOSOMAL SUBUNIT PROTEIN UL4M"/>
    <property type="match status" value="1"/>
</dbReference>
<dbReference type="Pfam" id="PF00573">
    <property type="entry name" value="Ribosomal_L4"/>
    <property type="match status" value="1"/>
</dbReference>
<dbReference type="SUPFAM" id="SSF52166">
    <property type="entry name" value="Ribosomal protein L4"/>
    <property type="match status" value="1"/>
</dbReference>
<sequence>MATVNVLNWKKEKVGSVELAADVFETPVKKEVLHTVVQWQLAARRQGTHMTKTKGLVSGGGKKPFKQKGTGGARQGSSRSILMPGGGTAFGPQPRSYAFVLPKKVRRLGLSMALSHLQKEGKLFIVDSMASEGKTAELNKRLQAFGLKKAVLVDSVVDDKFNRASKNLPTFKYFPVEGLNVFDLLKYDAAVITKDSVAKIVDRCSLEKA</sequence>
<evidence type="ECO:0000255" key="1">
    <source>
        <dbReference type="HAMAP-Rule" id="MF_01328"/>
    </source>
</evidence>
<evidence type="ECO:0000256" key="2">
    <source>
        <dbReference type="SAM" id="MobiDB-lite"/>
    </source>
</evidence>
<evidence type="ECO:0000305" key="3"/>
<gene>
    <name evidence="1" type="primary">rplD</name>
    <name type="ordered locus">Bd2975</name>
</gene>
<keyword id="KW-1185">Reference proteome</keyword>
<keyword id="KW-0687">Ribonucleoprotein</keyword>
<keyword id="KW-0689">Ribosomal protein</keyword>
<keyword id="KW-0694">RNA-binding</keyword>
<keyword id="KW-0699">rRNA-binding</keyword>